<evidence type="ECO:0000255" key="1">
    <source>
        <dbReference type="HAMAP-Rule" id="MF_00484"/>
    </source>
</evidence>
<proteinExistence type="inferred from homology"/>
<organism>
    <name type="scientific">Enterobacter sp. (strain 638)</name>
    <dbReference type="NCBI Taxonomy" id="399742"/>
    <lineage>
        <taxon>Bacteria</taxon>
        <taxon>Pseudomonadati</taxon>
        <taxon>Pseudomonadota</taxon>
        <taxon>Gammaproteobacteria</taxon>
        <taxon>Enterobacterales</taxon>
        <taxon>Enterobacteriaceae</taxon>
        <taxon>Enterobacter</taxon>
    </lineage>
</organism>
<gene>
    <name evidence="1" type="primary">glgA</name>
    <name type="ordered locus">Ent638_3837</name>
</gene>
<dbReference type="EC" id="2.4.1.21" evidence="1"/>
<dbReference type="EMBL" id="CP000653">
    <property type="protein sequence ID" value="ABP62492.1"/>
    <property type="molecule type" value="Genomic_DNA"/>
</dbReference>
<dbReference type="RefSeq" id="WP_015960797.1">
    <property type="nucleotide sequence ID" value="NC_009436.1"/>
</dbReference>
<dbReference type="SMR" id="A4WFL2"/>
<dbReference type="STRING" id="399742.Ent638_3837"/>
<dbReference type="CAZy" id="GT5">
    <property type="family name" value="Glycosyltransferase Family 5"/>
</dbReference>
<dbReference type="KEGG" id="ent:Ent638_3837"/>
<dbReference type="eggNOG" id="COG0297">
    <property type="taxonomic scope" value="Bacteria"/>
</dbReference>
<dbReference type="HOGENOM" id="CLU_009583_18_2_6"/>
<dbReference type="OrthoDB" id="9808590at2"/>
<dbReference type="UniPathway" id="UPA00164"/>
<dbReference type="Proteomes" id="UP000000230">
    <property type="component" value="Chromosome"/>
</dbReference>
<dbReference type="GO" id="GO:0005829">
    <property type="term" value="C:cytosol"/>
    <property type="evidence" value="ECO:0007669"/>
    <property type="project" value="TreeGrafter"/>
</dbReference>
<dbReference type="GO" id="GO:0009011">
    <property type="term" value="F:alpha-1,4-glucan glucosyltransferase (ADP-glucose donor) activity"/>
    <property type="evidence" value="ECO:0007669"/>
    <property type="project" value="UniProtKB-UniRule"/>
</dbReference>
<dbReference type="GO" id="GO:0004373">
    <property type="term" value="F:alpha-1,4-glucan glucosyltransferase (UDP-glucose donor) activity"/>
    <property type="evidence" value="ECO:0007669"/>
    <property type="project" value="InterPro"/>
</dbReference>
<dbReference type="GO" id="GO:0005978">
    <property type="term" value="P:glycogen biosynthetic process"/>
    <property type="evidence" value="ECO:0007669"/>
    <property type="project" value="UniProtKB-UniRule"/>
</dbReference>
<dbReference type="CDD" id="cd03791">
    <property type="entry name" value="GT5_Glycogen_synthase_DULL1-like"/>
    <property type="match status" value="1"/>
</dbReference>
<dbReference type="FunFam" id="3.40.50.2000:FF:000008">
    <property type="entry name" value="Glycogen synthase"/>
    <property type="match status" value="1"/>
</dbReference>
<dbReference type="FunFam" id="3.40.50.2000:FF:000011">
    <property type="entry name" value="Glycogen synthase"/>
    <property type="match status" value="1"/>
</dbReference>
<dbReference type="Gene3D" id="3.40.50.2000">
    <property type="entry name" value="Glycogen Phosphorylase B"/>
    <property type="match status" value="2"/>
</dbReference>
<dbReference type="HAMAP" id="MF_00484">
    <property type="entry name" value="Glycogen_synth"/>
    <property type="match status" value="1"/>
</dbReference>
<dbReference type="InterPro" id="IPR001296">
    <property type="entry name" value="Glyco_trans_1"/>
</dbReference>
<dbReference type="InterPro" id="IPR011835">
    <property type="entry name" value="GS/SS"/>
</dbReference>
<dbReference type="InterPro" id="IPR013534">
    <property type="entry name" value="Starch_synth_cat_dom"/>
</dbReference>
<dbReference type="NCBIfam" id="TIGR02095">
    <property type="entry name" value="glgA"/>
    <property type="match status" value="1"/>
</dbReference>
<dbReference type="NCBIfam" id="NF001899">
    <property type="entry name" value="PRK00654.1-2"/>
    <property type="match status" value="1"/>
</dbReference>
<dbReference type="PANTHER" id="PTHR45825:SF11">
    <property type="entry name" value="ALPHA AMYLASE DOMAIN-CONTAINING PROTEIN"/>
    <property type="match status" value="1"/>
</dbReference>
<dbReference type="PANTHER" id="PTHR45825">
    <property type="entry name" value="GRANULE-BOUND STARCH SYNTHASE 1, CHLOROPLASTIC/AMYLOPLASTIC"/>
    <property type="match status" value="1"/>
</dbReference>
<dbReference type="Pfam" id="PF08323">
    <property type="entry name" value="Glyco_transf_5"/>
    <property type="match status" value="1"/>
</dbReference>
<dbReference type="Pfam" id="PF00534">
    <property type="entry name" value="Glycos_transf_1"/>
    <property type="match status" value="1"/>
</dbReference>
<dbReference type="SUPFAM" id="SSF53756">
    <property type="entry name" value="UDP-Glycosyltransferase/glycogen phosphorylase"/>
    <property type="match status" value="1"/>
</dbReference>
<feature type="chain" id="PRO_1000060432" description="Glycogen synthase">
    <location>
        <begin position="1"/>
        <end position="478"/>
    </location>
</feature>
<feature type="binding site" evidence="1">
    <location>
        <position position="15"/>
    </location>
    <ligand>
        <name>ADP-alpha-D-glucose</name>
        <dbReference type="ChEBI" id="CHEBI:57498"/>
    </ligand>
</feature>
<accession>A4WFL2</accession>
<comment type="function">
    <text evidence="1">Synthesizes alpha-1,4-glucan chains using ADP-glucose.</text>
</comment>
<comment type="catalytic activity">
    <reaction evidence="1">
        <text>[(1-&gt;4)-alpha-D-glucosyl](n) + ADP-alpha-D-glucose = [(1-&gt;4)-alpha-D-glucosyl](n+1) + ADP + H(+)</text>
        <dbReference type="Rhea" id="RHEA:18189"/>
        <dbReference type="Rhea" id="RHEA-COMP:9584"/>
        <dbReference type="Rhea" id="RHEA-COMP:9587"/>
        <dbReference type="ChEBI" id="CHEBI:15378"/>
        <dbReference type="ChEBI" id="CHEBI:15444"/>
        <dbReference type="ChEBI" id="CHEBI:57498"/>
        <dbReference type="ChEBI" id="CHEBI:456216"/>
        <dbReference type="EC" id="2.4.1.21"/>
    </reaction>
</comment>
<comment type="pathway">
    <text evidence="1">Glycan biosynthesis; glycogen biosynthesis.</text>
</comment>
<comment type="similarity">
    <text evidence="1">Belongs to the glycosyltransferase 1 family. Bacterial/plant glycogen synthase subfamily.</text>
</comment>
<name>GLGA_ENT38</name>
<keyword id="KW-0320">Glycogen biosynthesis</keyword>
<keyword id="KW-0328">Glycosyltransferase</keyword>
<keyword id="KW-0808">Transferase</keyword>
<protein>
    <recommendedName>
        <fullName evidence="1">Glycogen synthase</fullName>
        <ecNumber evidence="1">2.4.1.21</ecNumber>
    </recommendedName>
    <alternativeName>
        <fullName evidence="1">Starch [bacterial glycogen] synthase</fullName>
    </alternativeName>
</protein>
<sequence>MQVLHVCSEMFPLLKTGGLADVLGALPAAQIAEGIDTRVLLPAFPDIRRGIPDAQVVSRRDTFAGRITLLFGHYNGVGIYLIDAPHLYDRPGSPYHDTNLFAYTDNVLRFALLGWVGAEMATGLDPFWRPDIVHAHDWHAGLAPAYLAARGHPAKSVFTVHNLAYQGMYYAHHMNEIDLPWSFYNMHGLEFNGQISFLKAGLYYADHITAVSPTYAREITEPEFGYGMEGLLRQRQREGRLTGILNGVDEKIWNPETDLLLASRFSRDSVEDKAENKRQLQVAMGLKVNDKVPLFAVVSRLTSQKGLDLVLEALPGLLEQGGQLALLGAGDPVLQEGFLAAAAEHPGQVGVQIGYHEAFSHRLMGGSDVILVPSRFEPCGLTQLYGLKYGTLPLVRRTGGLADTVSDTSLENLADGIATGFAFEDSNAWSLLRAIRRAFVLWSRPSLWRFVQRQAMAMDFSWHVAAQSYRDLYQRLKS</sequence>
<reference key="1">
    <citation type="journal article" date="2010" name="PLoS Genet.">
        <title>Genome sequence of the plant growth promoting endophytic bacterium Enterobacter sp. 638.</title>
        <authorList>
            <person name="Taghavi S."/>
            <person name="van der Lelie D."/>
            <person name="Hoffman A."/>
            <person name="Zhang Y.B."/>
            <person name="Walla M.D."/>
            <person name="Vangronsveld J."/>
            <person name="Newman L."/>
            <person name="Monchy S."/>
        </authorList>
    </citation>
    <scope>NUCLEOTIDE SEQUENCE [LARGE SCALE GENOMIC DNA]</scope>
    <source>
        <strain>638</strain>
    </source>
</reference>